<comment type="function">
    <text evidence="1">Presumably involved in the processing and regular turnover of intracellular proteins. Catalyzes the removal of unsubstituted N-terminal amino acids from various peptides.</text>
</comment>
<comment type="catalytic activity">
    <reaction evidence="1">
        <text>Release of an N-terminal amino acid, Xaa-|-Yaa-, in which Xaa is preferably Leu, but may be other amino acids including Pro although not Arg or Lys, and Yaa may be Pro. Amino acid amides and methyl esters are also readily hydrolyzed, but rates on arylamides are exceedingly low.</text>
        <dbReference type="EC" id="3.4.11.1"/>
    </reaction>
</comment>
<comment type="catalytic activity">
    <reaction evidence="1">
        <text>Release of an N-terminal amino acid, preferentially leucine, but not glutamic or aspartic acids.</text>
        <dbReference type="EC" id="3.4.11.10"/>
    </reaction>
</comment>
<comment type="cofactor">
    <cofactor evidence="1">
        <name>Mn(2+)</name>
        <dbReference type="ChEBI" id="CHEBI:29035"/>
    </cofactor>
    <text evidence="1">Binds 2 manganese ions per subunit.</text>
</comment>
<comment type="subcellular location">
    <subcellularLocation>
        <location evidence="1">Cytoplasm</location>
    </subcellularLocation>
</comment>
<comment type="similarity">
    <text evidence="1">Belongs to the peptidase M17 family.</text>
</comment>
<keyword id="KW-0031">Aminopeptidase</keyword>
<keyword id="KW-0963">Cytoplasm</keyword>
<keyword id="KW-0378">Hydrolase</keyword>
<keyword id="KW-0464">Manganese</keyword>
<keyword id="KW-0479">Metal-binding</keyword>
<keyword id="KW-0645">Protease</keyword>
<keyword id="KW-1185">Reference proteome</keyword>
<feature type="chain" id="PRO_0000165755" description="Probable cytosol aminopeptidase">
    <location>
        <begin position="1"/>
        <end position="496"/>
    </location>
</feature>
<feature type="active site" evidence="1">
    <location>
        <position position="276"/>
    </location>
</feature>
<feature type="active site" evidence="1">
    <location>
        <position position="350"/>
    </location>
</feature>
<feature type="binding site" evidence="1">
    <location>
        <position position="264"/>
    </location>
    <ligand>
        <name>Mn(2+)</name>
        <dbReference type="ChEBI" id="CHEBI:29035"/>
        <label>2</label>
    </ligand>
</feature>
<feature type="binding site" evidence="1">
    <location>
        <position position="269"/>
    </location>
    <ligand>
        <name>Mn(2+)</name>
        <dbReference type="ChEBI" id="CHEBI:29035"/>
        <label>1</label>
    </ligand>
</feature>
<feature type="binding site" evidence="1">
    <location>
        <position position="269"/>
    </location>
    <ligand>
        <name>Mn(2+)</name>
        <dbReference type="ChEBI" id="CHEBI:29035"/>
        <label>2</label>
    </ligand>
</feature>
<feature type="binding site" evidence="1">
    <location>
        <position position="287"/>
    </location>
    <ligand>
        <name>Mn(2+)</name>
        <dbReference type="ChEBI" id="CHEBI:29035"/>
        <label>2</label>
    </ligand>
</feature>
<feature type="binding site" evidence="1">
    <location>
        <position position="346"/>
    </location>
    <ligand>
        <name>Mn(2+)</name>
        <dbReference type="ChEBI" id="CHEBI:29035"/>
        <label>1</label>
    </ligand>
</feature>
<feature type="binding site" evidence="1">
    <location>
        <position position="348"/>
    </location>
    <ligand>
        <name>Mn(2+)</name>
        <dbReference type="ChEBI" id="CHEBI:29035"/>
        <label>1</label>
    </ligand>
</feature>
<feature type="binding site" evidence="1">
    <location>
        <position position="348"/>
    </location>
    <ligand>
        <name>Mn(2+)</name>
        <dbReference type="ChEBI" id="CHEBI:29035"/>
        <label>2</label>
    </ligand>
</feature>
<reference key="1">
    <citation type="journal article" date="2003" name="Science">
        <title>Genome of Geobacter sulfurreducens: metal reduction in subsurface environments.</title>
        <authorList>
            <person name="Methe B.A."/>
            <person name="Nelson K.E."/>
            <person name="Eisen J.A."/>
            <person name="Paulsen I.T."/>
            <person name="Nelson W.C."/>
            <person name="Heidelberg J.F."/>
            <person name="Wu D."/>
            <person name="Wu M."/>
            <person name="Ward N.L."/>
            <person name="Beanan M.J."/>
            <person name="Dodson R.J."/>
            <person name="Madupu R."/>
            <person name="Brinkac L.M."/>
            <person name="Daugherty S.C."/>
            <person name="DeBoy R.T."/>
            <person name="Durkin A.S."/>
            <person name="Gwinn M.L."/>
            <person name="Kolonay J.F."/>
            <person name="Sullivan S.A."/>
            <person name="Haft D.H."/>
            <person name="Selengut J."/>
            <person name="Davidsen T.M."/>
            <person name="Zafar N."/>
            <person name="White O."/>
            <person name="Tran B."/>
            <person name="Romero C."/>
            <person name="Forberger H.A."/>
            <person name="Weidman J.F."/>
            <person name="Khouri H.M."/>
            <person name="Feldblyum T.V."/>
            <person name="Utterback T.R."/>
            <person name="Van Aken S.E."/>
            <person name="Lovley D.R."/>
            <person name="Fraser C.M."/>
        </authorList>
    </citation>
    <scope>NUCLEOTIDE SEQUENCE [LARGE SCALE GENOMIC DNA]</scope>
    <source>
        <strain>ATCC 51573 / DSM 12127 / PCA</strain>
    </source>
</reference>
<accession>Q74GB4</accession>
<sequence length="496" mass="52228">MVISVEAADYTAFPCAALLVGCREDNPLEDSLLARIDQLLQGAIASLVQSREITGELNRVTILHTLGRLPAERIVLVGLGNSGALTSDRLRQVGGSAVKALKGAGVTRAASVVHRAAGVPPTSVADIAQGLSLGDYSFDIYKTKPGTTVPVTELVNLFEPGTDTADAERLLAADATICEAVSFARDLVSQPGNVATPLFLAEKALEFSARLGIACTVLDRDEMERQGMEGILSVAKGSHQLPRFIVLEYRGGSADKRPTVLVGKGITFDSGGISLKPREGMERMKDDMAGAAAVMGAVMAVAGLRLPVNVIGLIPAAENLPGGGAYKPGDIVRTMSGQTVEIVNTDAEGRMILSDALFYAQRFKPAAVIDLATLTGACLVALGSAVSGVMGNDAALVKLLRRAGEATGERLWELPLWDEYGEIMKSDVADLKNAGGPHAGTITAAWFLQRFVGKSRWAHVDIAGTAWEEKGRPYQPKGATGVGVRLLVEYLKATVR</sequence>
<evidence type="ECO:0000255" key="1">
    <source>
        <dbReference type="HAMAP-Rule" id="MF_00181"/>
    </source>
</evidence>
<organism>
    <name type="scientific">Geobacter sulfurreducens (strain ATCC 51573 / DSM 12127 / PCA)</name>
    <dbReference type="NCBI Taxonomy" id="243231"/>
    <lineage>
        <taxon>Bacteria</taxon>
        <taxon>Pseudomonadati</taxon>
        <taxon>Thermodesulfobacteriota</taxon>
        <taxon>Desulfuromonadia</taxon>
        <taxon>Geobacterales</taxon>
        <taxon>Geobacteraceae</taxon>
        <taxon>Geobacter</taxon>
    </lineage>
</organism>
<name>AMPA_GEOSL</name>
<dbReference type="EC" id="3.4.11.1" evidence="1"/>
<dbReference type="EC" id="3.4.11.10" evidence="1"/>
<dbReference type="EMBL" id="AE017180">
    <property type="protein sequence ID" value="AAR33665.1"/>
    <property type="molecule type" value="Genomic_DNA"/>
</dbReference>
<dbReference type="RefSeq" id="NP_951392.1">
    <property type="nucleotide sequence ID" value="NC_002939.5"/>
</dbReference>
<dbReference type="RefSeq" id="WP_010941000.1">
    <property type="nucleotide sequence ID" value="NC_002939.5"/>
</dbReference>
<dbReference type="SMR" id="Q74GB4"/>
<dbReference type="FunCoup" id="Q74GB4">
    <property type="interactions" value="416"/>
</dbReference>
<dbReference type="STRING" id="243231.GSU0332"/>
<dbReference type="EnsemblBacteria" id="AAR33665">
    <property type="protein sequence ID" value="AAR33665"/>
    <property type="gene ID" value="GSU0332"/>
</dbReference>
<dbReference type="KEGG" id="gsu:GSU0332"/>
<dbReference type="PATRIC" id="fig|243231.5.peg.329"/>
<dbReference type="eggNOG" id="COG0260">
    <property type="taxonomic scope" value="Bacteria"/>
</dbReference>
<dbReference type="HOGENOM" id="CLU_013734_2_2_7"/>
<dbReference type="InParanoid" id="Q74GB4"/>
<dbReference type="OrthoDB" id="9809354at2"/>
<dbReference type="Proteomes" id="UP000000577">
    <property type="component" value="Chromosome"/>
</dbReference>
<dbReference type="GO" id="GO:0005737">
    <property type="term" value="C:cytoplasm"/>
    <property type="evidence" value="ECO:0000318"/>
    <property type="project" value="GO_Central"/>
</dbReference>
<dbReference type="GO" id="GO:0004177">
    <property type="term" value="F:aminopeptidase activity"/>
    <property type="evidence" value="ECO:0000318"/>
    <property type="project" value="GO_Central"/>
</dbReference>
<dbReference type="GO" id="GO:0030145">
    <property type="term" value="F:manganese ion binding"/>
    <property type="evidence" value="ECO:0007669"/>
    <property type="project" value="UniProtKB-UniRule"/>
</dbReference>
<dbReference type="GO" id="GO:0070006">
    <property type="term" value="F:metalloaminopeptidase activity"/>
    <property type="evidence" value="ECO:0007669"/>
    <property type="project" value="InterPro"/>
</dbReference>
<dbReference type="GO" id="GO:0006508">
    <property type="term" value="P:proteolysis"/>
    <property type="evidence" value="ECO:0000318"/>
    <property type="project" value="GO_Central"/>
</dbReference>
<dbReference type="CDD" id="cd00433">
    <property type="entry name" value="Peptidase_M17"/>
    <property type="match status" value="1"/>
</dbReference>
<dbReference type="Gene3D" id="3.40.220.10">
    <property type="entry name" value="Leucine Aminopeptidase, subunit E, domain 1"/>
    <property type="match status" value="1"/>
</dbReference>
<dbReference type="Gene3D" id="3.40.630.10">
    <property type="entry name" value="Zn peptidases"/>
    <property type="match status" value="1"/>
</dbReference>
<dbReference type="HAMAP" id="MF_00181">
    <property type="entry name" value="Cytosol_peptidase_M17"/>
    <property type="match status" value="1"/>
</dbReference>
<dbReference type="InterPro" id="IPR011356">
    <property type="entry name" value="Leucine_aapep/pepB"/>
</dbReference>
<dbReference type="InterPro" id="IPR043472">
    <property type="entry name" value="Macro_dom-like"/>
</dbReference>
<dbReference type="InterPro" id="IPR000819">
    <property type="entry name" value="Peptidase_M17_C"/>
</dbReference>
<dbReference type="InterPro" id="IPR023042">
    <property type="entry name" value="Peptidase_M17_leu_NH2_pept"/>
</dbReference>
<dbReference type="InterPro" id="IPR008283">
    <property type="entry name" value="Peptidase_M17_N"/>
</dbReference>
<dbReference type="NCBIfam" id="NF002073">
    <property type="entry name" value="PRK00913.1-2"/>
    <property type="match status" value="1"/>
</dbReference>
<dbReference type="NCBIfam" id="NF002074">
    <property type="entry name" value="PRK00913.1-4"/>
    <property type="match status" value="1"/>
</dbReference>
<dbReference type="NCBIfam" id="NF002077">
    <property type="entry name" value="PRK00913.2-4"/>
    <property type="match status" value="1"/>
</dbReference>
<dbReference type="NCBIfam" id="NF002083">
    <property type="entry name" value="PRK00913.3-5"/>
    <property type="match status" value="1"/>
</dbReference>
<dbReference type="PANTHER" id="PTHR11963:SF23">
    <property type="entry name" value="CYTOSOL AMINOPEPTIDASE"/>
    <property type="match status" value="1"/>
</dbReference>
<dbReference type="PANTHER" id="PTHR11963">
    <property type="entry name" value="LEUCINE AMINOPEPTIDASE-RELATED"/>
    <property type="match status" value="1"/>
</dbReference>
<dbReference type="Pfam" id="PF00883">
    <property type="entry name" value="Peptidase_M17"/>
    <property type="match status" value="1"/>
</dbReference>
<dbReference type="Pfam" id="PF02789">
    <property type="entry name" value="Peptidase_M17_N"/>
    <property type="match status" value="1"/>
</dbReference>
<dbReference type="PRINTS" id="PR00481">
    <property type="entry name" value="LAMNOPPTDASE"/>
</dbReference>
<dbReference type="SUPFAM" id="SSF52949">
    <property type="entry name" value="Macro domain-like"/>
    <property type="match status" value="1"/>
</dbReference>
<dbReference type="SUPFAM" id="SSF53187">
    <property type="entry name" value="Zn-dependent exopeptidases"/>
    <property type="match status" value="1"/>
</dbReference>
<dbReference type="PROSITE" id="PS00631">
    <property type="entry name" value="CYTOSOL_AP"/>
    <property type="match status" value="1"/>
</dbReference>
<gene>
    <name evidence="1" type="primary">pepA</name>
    <name type="ordered locus">GSU0332</name>
</gene>
<protein>
    <recommendedName>
        <fullName evidence="1">Probable cytosol aminopeptidase</fullName>
        <ecNumber evidence="1">3.4.11.1</ecNumber>
    </recommendedName>
    <alternativeName>
        <fullName evidence="1">Leucine aminopeptidase</fullName>
        <shortName evidence="1">LAP</shortName>
        <ecNumber evidence="1">3.4.11.10</ecNumber>
    </alternativeName>
    <alternativeName>
        <fullName evidence="1">Leucyl aminopeptidase</fullName>
    </alternativeName>
</protein>
<proteinExistence type="inferred from homology"/>